<dbReference type="EC" id="3.6.-.-" evidence="1"/>
<dbReference type="EMBL" id="FM180568">
    <property type="protein sequence ID" value="CAS11565.1"/>
    <property type="molecule type" value="Genomic_DNA"/>
</dbReference>
<dbReference type="RefSeq" id="WP_001282358.1">
    <property type="nucleotide sequence ID" value="NC_011601.1"/>
</dbReference>
<dbReference type="SMR" id="B7UMH3"/>
<dbReference type="KEGG" id="ecg:E2348C_4017"/>
<dbReference type="HOGENOM" id="CLU_019624_4_1_6"/>
<dbReference type="Proteomes" id="UP000008205">
    <property type="component" value="Chromosome"/>
</dbReference>
<dbReference type="GO" id="GO:0005829">
    <property type="term" value="C:cytosol"/>
    <property type="evidence" value="ECO:0007669"/>
    <property type="project" value="TreeGrafter"/>
</dbReference>
<dbReference type="GO" id="GO:0005525">
    <property type="term" value="F:GTP binding"/>
    <property type="evidence" value="ECO:0007669"/>
    <property type="project" value="UniProtKB-UniRule"/>
</dbReference>
<dbReference type="GO" id="GO:0003924">
    <property type="term" value="F:GTPase activity"/>
    <property type="evidence" value="ECO:0007669"/>
    <property type="project" value="UniProtKB-UniRule"/>
</dbReference>
<dbReference type="GO" id="GO:0046872">
    <property type="term" value="F:metal ion binding"/>
    <property type="evidence" value="ECO:0007669"/>
    <property type="project" value="UniProtKB-KW"/>
</dbReference>
<dbReference type="GO" id="GO:0030488">
    <property type="term" value="P:tRNA methylation"/>
    <property type="evidence" value="ECO:0007669"/>
    <property type="project" value="TreeGrafter"/>
</dbReference>
<dbReference type="GO" id="GO:0002098">
    <property type="term" value="P:tRNA wobble uridine modification"/>
    <property type="evidence" value="ECO:0007669"/>
    <property type="project" value="TreeGrafter"/>
</dbReference>
<dbReference type="CDD" id="cd04164">
    <property type="entry name" value="trmE"/>
    <property type="match status" value="1"/>
</dbReference>
<dbReference type="CDD" id="cd14858">
    <property type="entry name" value="TrmE_N"/>
    <property type="match status" value="1"/>
</dbReference>
<dbReference type="FunFam" id="3.30.1360.120:FF:000001">
    <property type="entry name" value="tRNA modification GTPase MnmE"/>
    <property type="match status" value="1"/>
</dbReference>
<dbReference type="FunFam" id="3.40.50.300:FF:000249">
    <property type="entry name" value="tRNA modification GTPase MnmE"/>
    <property type="match status" value="1"/>
</dbReference>
<dbReference type="Gene3D" id="3.40.50.300">
    <property type="entry name" value="P-loop containing nucleotide triphosphate hydrolases"/>
    <property type="match status" value="1"/>
</dbReference>
<dbReference type="Gene3D" id="3.30.1360.120">
    <property type="entry name" value="Probable tRNA modification gtpase trme, domain 1"/>
    <property type="match status" value="1"/>
</dbReference>
<dbReference type="Gene3D" id="1.20.120.430">
    <property type="entry name" value="tRNA modification GTPase MnmE domain 2"/>
    <property type="match status" value="1"/>
</dbReference>
<dbReference type="HAMAP" id="MF_00379">
    <property type="entry name" value="GTPase_MnmE"/>
    <property type="match status" value="1"/>
</dbReference>
<dbReference type="InterPro" id="IPR031168">
    <property type="entry name" value="G_TrmE"/>
</dbReference>
<dbReference type="InterPro" id="IPR006073">
    <property type="entry name" value="GTP-bd"/>
</dbReference>
<dbReference type="InterPro" id="IPR018948">
    <property type="entry name" value="GTP-bd_TrmE_N"/>
</dbReference>
<dbReference type="InterPro" id="IPR004520">
    <property type="entry name" value="GTPase_MnmE"/>
</dbReference>
<dbReference type="InterPro" id="IPR027368">
    <property type="entry name" value="MnmE_dom2"/>
</dbReference>
<dbReference type="InterPro" id="IPR025867">
    <property type="entry name" value="MnmE_helical"/>
</dbReference>
<dbReference type="InterPro" id="IPR027417">
    <property type="entry name" value="P-loop_NTPase"/>
</dbReference>
<dbReference type="InterPro" id="IPR005225">
    <property type="entry name" value="Small_GTP-bd"/>
</dbReference>
<dbReference type="InterPro" id="IPR027266">
    <property type="entry name" value="TrmE/GcvT_dom1"/>
</dbReference>
<dbReference type="NCBIfam" id="TIGR00450">
    <property type="entry name" value="mnmE_trmE_thdF"/>
    <property type="match status" value="1"/>
</dbReference>
<dbReference type="NCBIfam" id="NF003661">
    <property type="entry name" value="PRK05291.1-3"/>
    <property type="match status" value="1"/>
</dbReference>
<dbReference type="NCBIfam" id="TIGR00231">
    <property type="entry name" value="small_GTP"/>
    <property type="match status" value="1"/>
</dbReference>
<dbReference type="PANTHER" id="PTHR42714">
    <property type="entry name" value="TRNA MODIFICATION GTPASE GTPBP3"/>
    <property type="match status" value="1"/>
</dbReference>
<dbReference type="PANTHER" id="PTHR42714:SF2">
    <property type="entry name" value="TRNA MODIFICATION GTPASE GTPBP3, MITOCHONDRIAL"/>
    <property type="match status" value="1"/>
</dbReference>
<dbReference type="Pfam" id="PF01926">
    <property type="entry name" value="MMR_HSR1"/>
    <property type="match status" value="1"/>
</dbReference>
<dbReference type="Pfam" id="PF12631">
    <property type="entry name" value="MnmE_helical"/>
    <property type="match status" value="1"/>
</dbReference>
<dbReference type="Pfam" id="PF10396">
    <property type="entry name" value="TrmE_N"/>
    <property type="match status" value="1"/>
</dbReference>
<dbReference type="SUPFAM" id="SSF52540">
    <property type="entry name" value="P-loop containing nucleoside triphosphate hydrolases"/>
    <property type="match status" value="1"/>
</dbReference>
<dbReference type="SUPFAM" id="SSF116878">
    <property type="entry name" value="TrmE connector domain"/>
    <property type="match status" value="1"/>
</dbReference>
<dbReference type="PROSITE" id="PS51709">
    <property type="entry name" value="G_TRME"/>
    <property type="match status" value="1"/>
</dbReference>
<feature type="chain" id="PRO_1000197046" description="tRNA modification GTPase MnmE">
    <location>
        <begin position="1"/>
        <end position="454"/>
    </location>
</feature>
<feature type="domain" description="TrmE-type G">
    <location>
        <begin position="216"/>
        <end position="377"/>
    </location>
</feature>
<feature type="binding site" evidence="1">
    <location>
        <position position="23"/>
    </location>
    <ligand>
        <name>(6S)-5-formyl-5,6,7,8-tetrahydrofolate</name>
        <dbReference type="ChEBI" id="CHEBI:57457"/>
    </ligand>
</feature>
<feature type="binding site" evidence="1">
    <location>
        <position position="80"/>
    </location>
    <ligand>
        <name>(6S)-5-formyl-5,6,7,8-tetrahydrofolate</name>
        <dbReference type="ChEBI" id="CHEBI:57457"/>
    </ligand>
</feature>
<feature type="binding site" evidence="1">
    <location>
        <position position="120"/>
    </location>
    <ligand>
        <name>(6S)-5-formyl-5,6,7,8-tetrahydrofolate</name>
        <dbReference type="ChEBI" id="CHEBI:57457"/>
    </ligand>
</feature>
<feature type="binding site" evidence="1">
    <location>
        <begin position="226"/>
        <end position="231"/>
    </location>
    <ligand>
        <name>GTP</name>
        <dbReference type="ChEBI" id="CHEBI:37565"/>
    </ligand>
</feature>
<feature type="binding site" evidence="1">
    <location>
        <position position="226"/>
    </location>
    <ligand>
        <name>K(+)</name>
        <dbReference type="ChEBI" id="CHEBI:29103"/>
    </ligand>
</feature>
<feature type="binding site" evidence="1">
    <location>
        <position position="230"/>
    </location>
    <ligand>
        <name>Mg(2+)</name>
        <dbReference type="ChEBI" id="CHEBI:18420"/>
    </ligand>
</feature>
<feature type="binding site" evidence="1">
    <location>
        <begin position="245"/>
        <end position="251"/>
    </location>
    <ligand>
        <name>GTP</name>
        <dbReference type="ChEBI" id="CHEBI:37565"/>
    </ligand>
</feature>
<feature type="binding site" evidence="1">
    <location>
        <position position="245"/>
    </location>
    <ligand>
        <name>K(+)</name>
        <dbReference type="ChEBI" id="CHEBI:29103"/>
    </ligand>
</feature>
<feature type="binding site" evidence="1">
    <location>
        <position position="247"/>
    </location>
    <ligand>
        <name>K(+)</name>
        <dbReference type="ChEBI" id="CHEBI:29103"/>
    </ligand>
</feature>
<feature type="binding site" evidence="1">
    <location>
        <position position="250"/>
    </location>
    <ligand>
        <name>K(+)</name>
        <dbReference type="ChEBI" id="CHEBI:29103"/>
    </ligand>
</feature>
<feature type="binding site" evidence="1">
    <location>
        <position position="251"/>
    </location>
    <ligand>
        <name>Mg(2+)</name>
        <dbReference type="ChEBI" id="CHEBI:18420"/>
    </ligand>
</feature>
<feature type="binding site" evidence="1">
    <location>
        <begin position="270"/>
        <end position="273"/>
    </location>
    <ligand>
        <name>GTP</name>
        <dbReference type="ChEBI" id="CHEBI:37565"/>
    </ligand>
</feature>
<feature type="binding site" evidence="1">
    <location>
        <begin position="335"/>
        <end position="338"/>
    </location>
    <ligand>
        <name>GTP</name>
        <dbReference type="ChEBI" id="CHEBI:37565"/>
    </ligand>
</feature>
<feature type="binding site" evidence="1">
    <location>
        <begin position="358"/>
        <end position="360"/>
    </location>
    <ligand>
        <name>GTP</name>
        <dbReference type="ChEBI" id="CHEBI:37565"/>
    </ligand>
</feature>
<feature type="binding site" evidence="1">
    <location>
        <position position="454"/>
    </location>
    <ligand>
        <name>(6S)-5-formyl-5,6,7,8-tetrahydrofolate</name>
        <dbReference type="ChEBI" id="CHEBI:57457"/>
    </ligand>
</feature>
<proteinExistence type="inferred from homology"/>
<protein>
    <recommendedName>
        <fullName evidence="1">tRNA modification GTPase MnmE</fullName>
        <ecNumber evidence="1">3.6.-.-</ecNumber>
    </recommendedName>
</protein>
<gene>
    <name evidence="1" type="primary">mnmE</name>
    <name evidence="1" type="synonym">trmE</name>
    <name type="ordered locus">E2348C_4017</name>
</gene>
<reference key="1">
    <citation type="journal article" date="2009" name="J. Bacteriol.">
        <title>Complete genome sequence and comparative genome analysis of enteropathogenic Escherichia coli O127:H6 strain E2348/69.</title>
        <authorList>
            <person name="Iguchi A."/>
            <person name="Thomson N.R."/>
            <person name="Ogura Y."/>
            <person name="Saunders D."/>
            <person name="Ooka T."/>
            <person name="Henderson I.R."/>
            <person name="Harris D."/>
            <person name="Asadulghani M."/>
            <person name="Kurokawa K."/>
            <person name="Dean P."/>
            <person name="Kenny B."/>
            <person name="Quail M.A."/>
            <person name="Thurston S."/>
            <person name="Dougan G."/>
            <person name="Hayashi T."/>
            <person name="Parkhill J."/>
            <person name="Frankel G."/>
        </authorList>
    </citation>
    <scope>NUCLEOTIDE SEQUENCE [LARGE SCALE GENOMIC DNA]</scope>
    <source>
        <strain>E2348/69 / EPEC</strain>
    </source>
</reference>
<accession>B7UMH3</accession>
<sequence length="454" mass="49211">MSDNDTIVAQATPPGRGGVGILRISGLKAREVAETVLGKLPKPRYADYLPFKDADGSVLDQGIALWFPGPNSFTGEDVLELQGHGGPVILDLLLKRILTIPGLRIARPGEFSERAFLNDKLDLAQAEAIADLIDASSEQAARSALNSLQGAFSARVNHLVEALTHLRIYVEAAIDFPDEEIDFLSDGKIEAQLNDVIADLDAVRAEARQGSLLREGMKVVIAGRPNAGKSSLLNALAGREAAIVTDIAGTTRDVLREHIHIDGMPLHIIDTAGLREASDEVERIGIERAWQEIEQADRVLFMVDGTTTDAVDPAEIWPEFIARLPAKLPITVVRNKADITGETLGMSELNGHALIRLSARTGEGVDVLRNHLKQSMGFDTNMEGGFLARRRHLQALEQAAEHLQQGKAQLLGAWAGELLAEELRLAQQNLSEITGEFTSDDLLGRIFSSFCIGK</sequence>
<evidence type="ECO:0000255" key="1">
    <source>
        <dbReference type="HAMAP-Rule" id="MF_00379"/>
    </source>
</evidence>
<name>MNME_ECO27</name>
<organism>
    <name type="scientific">Escherichia coli O127:H6 (strain E2348/69 / EPEC)</name>
    <dbReference type="NCBI Taxonomy" id="574521"/>
    <lineage>
        <taxon>Bacteria</taxon>
        <taxon>Pseudomonadati</taxon>
        <taxon>Pseudomonadota</taxon>
        <taxon>Gammaproteobacteria</taxon>
        <taxon>Enterobacterales</taxon>
        <taxon>Enterobacteriaceae</taxon>
        <taxon>Escherichia</taxon>
    </lineage>
</organism>
<comment type="function">
    <text evidence="1">Exhibits a very high intrinsic GTPase hydrolysis rate. Involved in the addition of a carboxymethylaminomethyl (cmnm) group at the wobble position (U34) of certain tRNAs, forming tRNA-cmnm(5)s(2)U34.</text>
</comment>
<comment type="cofactor">
    <cofactor evidence="1">
        <name>K(+)</name>
        <dbReference type="ChEBI" id="CHEBI:29103"/>
    </cofactor>
    <text evidence="1">Binds 1 potassium ion per subunit.</text>
</comment>
<comment type="subunit">
    <text evidence="1">Homodimer. Heterotetramer of two MnmE and two MnmG subunits.</text>
</comment>
<comment type="subcellular location">
    <subcellularLocation>
        <location evidence="1">Cytoplasm</location>
    </subcellularLocation>
</comment>
<comment type="similarity">
    <text evidence="1">Belongs to the TRAFAC class TrmE-Era-EngA-EngB-Septin-like GTPase superfamily. TrmE GTPase family.</text>
</comment>
<keyword id="KW-0963">Cytoplasm</keyword>
<keyword id="KW-0342">GTP-binding</keyword>
<keyword id="KW-0378">Hydrolase</keyword>
<keyword id="KW-0460">Magnesium</keyword>
<keyword id="KW-0479">Metal-binding</keyword>
<keyword id="KW-0547">Nucleotide-binding</keyword>
<keyword id="KW-0630">Potassium</keyword>
<keyword id="KW-1185">Reference proteome</keyword>
<keyword id="KW-0819">tRNA processing</keyword>